<name>IRT1_ARATH</name>
<keyword id="KW-0025">Alternative splicing</keyword>
<keyword id="KW-1003">Cell membrane</keyword>
<keyword id="KW-0967">Endosome</keyword>
<keyword id="KW-0333">Golgi apparatus</keyword>
<keyword id="KW-0406">Ion transport</keyword>
<keyword id="KW-0408">Iron</keyword>
<keyword id="KW-0410">Iron transport</keyword>
<keyword id="KW-1017">Isopeptide bond</keyword>
<keyword id="KW-0472">Membrane</keyword>
<keyword id="KW-1185">Reference proteome</keyword>
<keyword id="KW-0732">Signal</keyword>
<keyword id="KW-0812">Transmembrane</keyword>
<keyword id="KW-1133">Transmembrane helix</keyword>
<keyword id="KW-0813">Transport</keyword>
<keyword id="KW-0832">Ubl conjugation</keyword>
<keyword id="KW-0926">Vacuole</keyword>
<proteinExistence type="evidence at protein level"/>
<organism>
    <name type="scientific">Arabidopsis thaliana</name>
    <name type="common">Mouse-ear cress</name>
    <dbReference type="NCBI Taxonomy" id="3702"/>
    <lineage>
        <taxon>Eukaryota</taxon>
        <taxon>Viridiplantae</taxon>
        <taxon>Streptophyta</taxon>
        <taxon>Embryophyta</taxon>
        <taxon>Tracheophyta</taxon>
        <taxon>Spermatophyta</taxon>
        <taxon>Magnoliopsida</taxon>
        <taxon>eudicotyledons</taxon>
        <taxon>Gunneridae</taxon>
        <taxon>Pentapetalae</taxon>
        <taxon>rosids</taxon>
        <taxon>malvids</taxon>
        <taxon>Brassicales</taxon>
        <taxon>Brassicaceae</taxon>
        <taxon>Camelineae</taxon>
        <taxon>Arabidopsis</taxon>
    </lineage>
</organism>
<sequence>MASNSALLMKTIFLVLIFVSFAISPATSTAPEECGSESANPCVNKAKALPLKVIAIFVILIASMIGVGAPLFSRNVSFLQPDGNIFTIIKCFASGIILGTGFMHVLPDSFEMLSSICLEENPWHKFPFSGFLAMLSGLITLAIDSMATSLYTSKNAVGIMPHGHGHGHGPANDVTLPIKEDDSSNAQLLRYRVIAMVLELGIIVHSVVIGLSLGATSDTCTIKGLIAALCFHQMFEGMGLGGCILQAEYTNMKKFVMAFFFAVTTPFGIALGIALSTVYQDNSPKALITVGLLNACSAGLLIYMALVDLLAAEFMGPKLQGSIKMQFKCLIAALLGCGGMSIIAKWA</sequence>
<reference key="1">
    <citation type="journal article" date="1999" name="Nature">
        <title>Sequence and analysis of chromosome 4 of the plant Arabidopsis thaliana.</title>
        <authorList>
            <person name="Mayer K.F.X."/>
            <person name="Schueller C."/>
            <person name="Wambutt R."/>
            <person name="Murphy G."/>
            <person name="Volckaert G."/>
            <person name="Pohl T."/>
            <person name="Duesterhoeft A."/>
            <person name="Stiekema W."/>
            <person name="Entian K.-D."/>
            <person name="Terryn N."/>
            <person name="Harris B."/>
            <person name="Ansorge W."/>
            <person name="Brandt P."/>
            <person name="Grivell L.A."/>
            <person name="Rieger M."/>
            <person name="Weichselgartner M."/>
            <person name="de Simone V."/>
            <person name="Obermaier B."/>
            <person name="Mache R."/>
            <person name="Mueller M."/>
            <person name="Kreis M."/>
            <person name="Delseny M."/>
            <person name="Puigdomenech P."/>
            <person name="Watson M."/>
            <person name="Schmidtheini T."/>
            <person name="Reichert B."/>
            <person name="Portetelle D."/>
            <person name="Perez-Alonso M."/>
            <person name="Boutry M."/>
            <person name="Bancroft I."/>
            <person name="Vos P."/>
            <person name="Hoheisel J."/>
            <person name="Zimmermann W."/>
            <person name="Wedler H."/>
            <person name="Ridley P."/>
            <person name="Langham S.-A."/>
            <person name="McCullagh B."/>
            <person name="Bilham L."/>
            <person name="Robben J."/>
            <person name="van der Schueren J."/>
            <person name="Grymonprez B."/>
            <person name="Chuang Y.-J."/>
            <person name="Vandenbussche F."/>
            <person name="Braeken M."/>
            <person name="Weltjens I."/>
            <person name="Voet M."/>
            <person name="Bastiaens I."/>
            <person name="Aert R."/>
            <person name="Defoor E."/>
            <person name="Weitzenegger T."/>
            <person name="Bothe G."/>
            <person name="Ramsperger U."/>
            <person name="Hilbert H."/>
            <person name="Braun M."/>
            <person name="Holzer E."/>
            <person name="Brandt A."/>
            <person name="Peters S."/>
            <person name="van Staveren M."/>
            <person name="Dirkse W."/>
            <person name="Mooijman P."/>
            <person name="Klein Lankhorst R."/>
            <person name="Rose M."/>
            <person name="Hauf J."/>
            <person name="Koetter P."/>
            <person name="Berneiser S."/>
            <person name="Hempel S."/>
            <person name="Feldpausch M."/>
            <person name="Lamberth S."/>
            <person name="Van den Daele H."/>
            <person name="De Keyser A."/>
            <person name="Buysshaert C."/>
            <person name="Gielen J."/>
            <person name="Villarroel R."/>
            <person name="De Clercq R."/>
            <person name="van Montagu M."/>
            <person name="Rogers J."/>
            <person name="Cronin A."/>
            <person name="Quail M.A."/>
            <person name="Bray-Allen S."/>
            <person name="Clark L."/>
            <person name="Doggett J."/>
            <person name="Hall S."/>
            <person name="Kay M."/>
            <person name="Lennard N."/>
            <person name="McLay K."/>
            <person name="Mayes R."/>
            <person name="Pettett A."/>
            <person name="Rajandream M.A."/>
            <person name="Lyne M."/>
            <person name="Benes V."/>
            <person name="Rechmann S."/>
            <person name="Borkova D."/>
            <person name="Bloecker H."/>
            <person name="Scharfe M."/>
            <person name="Grimm M."/>
            <person name="Loehnert T.-H."/>
            <person name="Dose S."/>
            <person name="de Haan M."/>
            <person name="Maarse A.C."/>
            <person name="Schaefer M."/>
            <person name="Mueller-Auer S."/>
            <person name="Gabel C."/>
            <person name="Fuchs M."/>
            <person name="Fartmann B."/>
            <person name="Granderath K."/>
            <person name="Dauner D."/>
            <person name="Herzl A."/>
            <person name="Neumann S."/>
            <person name="Argiriou A."/>
            <person name="Vitale D."/>
            <person name="Liguori R."/>
            <person name="Piravandi E."/>
            <person name="Massenet O."/>
            <person name="Quigley F."/>
            <person name="Clabauld G."/>
            <person name="Muendlein A."/>
            <person name="Felber R."/>
            <person name="Schnabl S."/>
            <person name="Hiller R."/>
            <person name="Schmidt W."/>
            <person name="Lecharny A."/>
            <person name="Aubourg S."/>
            <person name="Chefdor F."/>
            <person name="Cooke R."/>
            <person name="Berger C."/>
            <person name="Monfort A."/>
            <person name="Casacuberta E."/>
            <person name="Gibbons T."/>
            <person name="Weber N."/>
            <person name="Vandenbol M."/>
            <person name="Bargues M."/>
            <person name="Terol J."/>
            <person name="Torres A."/>
            <person name="Perez-Perez A."/>
            <person name="Purnelle B."/>
            <person name="Bent E."/>
            <person name="Johnson S."/>
            <person name="Tacon D."/>
            <person name="Jesse T."/>
            <person name="Heijnen L."/>
            <person name="Schwarz S."/>
            <person name="Scholler P."/>
            <person name="Heber S."/>
            <person name="Francs P."/>
            <person name="Bielke C."/>
            <person name="Frishman D."/>
            <person name="Haase D."/>
            <person name="Lemcke K."/>
            <person name="Mewes H.-W."/>
            <person name="Stocker S."/>
            <person name="Zaccaria P."/>
            <person name="Bevan M."/>
            <person name="Wilson R.K."/>
            <person name="de la Bastide M."/>
            <person name="Habermann K."/>
            <person name="Parnell L."/>
            <person name="Dedhia N."/>
            <person name="Gnoj L."/>
            <person name="Schutz K."/>
            <person name="Huang E."/>
            <person name="Spiegel L."/>
            <person name="Sekhon M."/>
            <person name="Murray J."/>
            <person name="Sheet P."/>
            <person name="Cordes M."/>
            <person name="Abu-Threideh J."/>
            <person name="Stoneking T."/>
            <person name="Kalicki J."/>
            <person name="Graves T."/>
            <person name="Harmon G."/>
            <person name="Edwards J."/>
            <person name="Latreille P."/>
            <person name="Courtney L."/>
            <person name="Cloud J."/>
            <person name="Abbott A."/>
            <person name="Scott K."/>
            <person name="Johnson D."/>
            <person name="Minx P."/>
            <person name="Bentley D."/>
            <person name="Fulton B."/>
            <person name="Miller N."/>
            <person name="Greco T."/>
            <person name="Kemp K."/>
            <person name="Kramer J."/>
            <person name="Fulton L."/>
            <person name="Mardis E."/>
            <person name="Dante M."/>
            <person name="Pepin K."/>
            <person name="Hillier L.W."/>
            <person name="Nelson J."/>
            <person name="Spieth J."/>
            <person name="Ryan E."/>
            <person name="Andrews S."/>
            <person name="Geisel C."/>
            <person name="Layman D."/>
            <person name="Du H."/>
            <person name="Ali J."/>
            <person name="Berghoff A."/>
            <person name="Jones K."/>
            <person name="Drone K."/>
            <person name="Cotton M."/>
            <person name="Joshu C."/>
            <person name="Antonoiu B."/>
            <person name="Zidanic M."/>
            <person name="Strong C."/>
            <person name="Sun H."/>
            <person name="Lamar B."/>
            <person name="Yordan C."/>
            <person name="Ma P."/>
            <person name="Zhong J."/>
            <person name="Preston R."/>
            <person name="Vil D."/>
            <person name="Shekher M."/>
            <person name="Matero A."/>
            <person name="Shah R."/>
            <person name="Swaby I.K."/>
            <person name="O'Shaughnessy A."/>
            <person name="Rodriguez M."/>
            <person name="Hoffman J."/>
            <person name="Till S."/>
            <person name="Granat S."/>
            <person name="Shohdy N."/>
            <person name="Hasegawa A."/>
            <person name="Hameed A."/>
            <person name="Lodhi M."/>
            <person name="Johnson A."/>
            <person name="Chen E."/>
            <person name="Marra M.A."/>
            <person name="Martienssen R."/>
            <person name="McCombie W.R."/>
        </authorList>
    </citation>
    <scope>NUCLEOTIDE SEQUENCE [LARGE SCALE GENOMIC DNA]</scope>
    <source>
        <strain>cv. Columbia</strain>
    </source>
</reference>
<reference key="2">
    <citation type="journal article" date="2017" name="Plant J.">
        <title>Araport11: a complete reannotation of the Arabidopsis thaliana reference genome.</title>
        <authorList>
            <person name="Cheng C.Y."/>
            <person name="Krishnakumar V."/>
            <person name="Chan A.P."/>
            <person name="Thibaud-Nissen F."/>
            <person name="Schobel S."/>
            <person name="Town C.D."/>
        </authorList>
    </citation>
    <scope>GENOME REANNOTATION</scope>
    <source>
        <strain>cv. Columbia</strain>
    </source>
</reference>
<reference key="3">
    <citation type="submission" date="2002-03" db="EMBL/GenBank/DDBJ databases">
        <title>Full-length cDNA from Arabidopsis thaliana.</title>
        <authorList>
            <person name="Brover V.V."/>
            <person name="Troukhan M.E."/>
            <person name="Alexandrov N.A."/>
            <person name="Lu Y.-P."/>
            <person name="Flavell R.B."/>
            <person name="Feldmann K.A."/>
        </authorList>
    </citation>
    <scope>NUCLEOTIDE SEQUENCE [LARGE SCALE MRNA] (ISOFORM 2)</scope>
</reference>
<reference key="4">
    <citation type="journal article" date="1996" name="Proc. Natl. Acad. Sci. U.S.A.">
        <title>A novel iron-regulated metal transporter from plants identified by functional expression in yeast.</title>
        <authorList>
            <person name="Eide D."/>
            <person name="Broderius M."/>
            <person name="Fett J."/>
            <person name="Guerinot M.L."/>
        </authorList>
    </citation>
    <scope>NUCLEOTIDE SEQUENCE [MRNA] OF 4-347 (ISOFORM 1)</scope>
    <scope>CHARACTERIZATION</scope>
    <source>
        <strain>cv. Landsberg erecta</strain>
    </source>
</reference>
<reference key="5">
    <citation type="journal article" date="1998" name="J. Membr. Biol.">
        <title>Sequence analyses and phylogenetic characterization of the ZIP family of metal ion transport proteins.</title>
        <authorList>
            <person name="Eng B.H."/>
            <person name="Guerinot M.L."/>
            <person name="Eide D."/>
            <person name="Saier M.H. Jr."/>
        </authorList>
    </citation>
    <scope>CHARACTERIZATION</scope>
    <scope>METAL-BINDING</scope>
</reference>
<reference key="6">
    <citation type="journal article" date="1999" name="Plant Mol. Biol.">
        <title>The IRT1 protein from Arabidopsis thaliana is a metal transporter with a broad substrate range.</title>
        <authorList>
            <person name="Korshunova Y.O."/>
            <person name="Eide D."/>
            <person name="Clark W.G."/>
            <person name="Guerinot M.L."/>
            <person name="Pakrasi H.B."/>
        </authorList>
    </citation>
    <scope>BROAD CATION RANGE</scope>
</reference>
<reference key="7">
    <citation type="journal article" date="2000" name="Proc. Natl. Acad. Sci. U.S.A.">
        <title>Altered selectivity in an Arabidopsis metal transporter.</title>
        <authorList>
            <person name="Rogers E.E."/>
            <person name="Eide D.J."/>
            <person name="Guerinot M.L."/>
        </authorList>
    </citation>
    <scope>MUTAGENESIS OF HIS-104; ASP-108; GLU-111; ASP-144; HIS-205; SER-206; HIS-232 AND GLU-236</scope>
</reference>
<reference key="8">
    <citation type="journal article" date="2002" name="Plant Cell">
        <title>IRT1, an Arabidopsis transporter essential for iron uptake from the soil and for plant growth.</title>
        <authorList>
            <person name="Vert G."/>
            <person name="Grotz N."/>
            <person name="Dedaldechamp F."/>
            <person name="Gaymard F."/>
            <person name="Guerinot M.L."/>
            <person name="Briat J.-F."/>
            <person name="Curie C."/>
        </authorList>
    </citation>
    <scope>FUNCTION</scope>
    <scope>SUBCELLULAR LOCATION</scope>
    <scope>TISSUE SPECIFICITY</scope>
    <scope>DISRUPTION PHENOTYPE</scope>
</reference>
<reference key="9">
    <citation type="journal article" date="2011" name="Proc. Natl. Acad. Sci. U.S.A.">
        <title>Monoubiquitin-dependent endocytosis of the iron-regulated transporter 1 (IRT1) transporter controls iron uptake in plants.</title>
        <authorList>
            <person name="Barberon M."/>
            <person name="Zelazny E."/>
            <person name="Robert S."/>
            <person name="Conejero G."/>
            <person name="Curie C."/>
            <person name="Friml J."/>
            <person name="Vert G."/>
        </authorList>
    </citation>
    <scope>SUBCELLULAR LOCATION</scope>
    <scope>MUTAGENESIS OF LYS-154 AND LYS-179</scope>
    <scope>UBIQUITINATION AT LYS-154 AND LYS-179</scope>
    <scope>INDUCTION BY IRON STARVATION</scope>
</reference>
<reference key="10">
    <citation type="journal article" date="2014" name="Proc. Natl. Acad. Sci. U.S.A.">
        <title>Polarization of IRON-REGULATED TRANSPORTER 1 (IRT1) to the plant-soil interface plays crucial role in metal homeostasis.</title>
        <authorList>
            <person name="Barberon M."/>
            <person name="Dubeaux G."/>
            <person name="Kolb C."/>
            <person name="Isono E."/>
            <person name="Zelazny E."/>
            <person name="Vert G."/>
        </authorList>
    </citation>
    <scope>INTERACTION WITH FREE1</scope>
    <scope>SUBCELLULAR LOCATION</scope>
</reference>
<accession>Q38856</accession>
<accession>Q8LBP0</accession>
<dbReference type="EMBL" id="AL024486">
    <property type="protein sequence ID" value="CAA19686.1"/>
    <property type="status" value="ALT_INIT"/>
    <property type="molecule type" value="Genomic_DNA"/>
</dbReference>
<dbReference type="EMBL" id="AL161551">
    <property type="protein sequence ID" value="CAB78971.1"/>
    <property type="status" value="ALT_INIT"/>
    <property type="molecule type" value="Genomic_DNA"/>
</dbReference>
<dbReference type="EMBL" id="CP002687">
    <property type="protein sequence ID" value="AEE84216.1"/>
    <property type="molecule type" value="Genomic_DNA"/>
</dbReference>
<dbReference type="EMBL" id="CP002687">
    <property type="protein sequence ID" value="AEE84217.1"/>
    <property type="molecule type" value="Genomic_DNA"/>
</dbReference>
<dbReference type="EMBL" id="AY087095">
    <property type="protein sequence ID" value="AAM64655.1"/>
    <property type="molecule type" value="mRNA"/>
</dbReference>
<dbReference type="EMBL" id="U27590">
    <property type="protein sequence ID" value="AAB01678.1"/>
    <property type="status" value="ALT_INIT"/>
    <property type="molecule type" value="mRNA"/>
</dbReference>
<dbReference type="PIR" id="T04750">
    <property type="entry name" value="T04750"/>
</dbReference>
<dbReference type="RefSeq" id="NP_567590.3">
    <molecule id="Q38856-1"/>
    <property type="nucleotide sequence ID" value="NM_118089.4"/>
</dbReference>
<dbReference type="RefSeq" id="NP_849546.1">
    <molecule id="Q38856-2"/>
    <property type="nucleotide sequence ID" value="NM_179215.2"/>
</dbReference>
<dbReference type="BioGRID" id="13006">
    <property type="interactions" value="3"/>
</dbReference>
<dbReference type="DIP" id="DIP-60391N"/>
<dbReference type="FunCoup" id="Q38856">
    <property type="interactions" value="2468"/>
</dbReference>
<dbReference type="IntAct" id="Q38856">
    <property type="interactions" value="1"/>
</dbReference>
<dbReference type="STRING" id="3702.Q38856"/>
<dbReference type="TCDB" id="2.A.5.1.2">
    <property type="family name" value="the zinc (zn(2+))-iron (fe(2+)) permease (zip) family"/>
</dbReference>
<dbReference type="iPTMnet" id="Q38856"/>
<dbReference type="PaxDb" id="3702-AT4G19690.2"/>
<dbReference type="ProteomicsDB" id="247047">
    <molecule id="Q38856-1"/>
</dbReference>
<dbReference type="EnsemblPlants" id="AT4G19690.1">
    <molecule id="Q38856-2"/>
    <property type="protein sequence ID" value="AT4G19690.1"/>
    <property type="gene ID" value="AT4G19690"/>
</dbReference>
<dbReference type="EnsemblPlants" id="AT4G19690.2">
    <molecule id="Q38856-1"/>
    <property type="protein sequence ID" value="AT4G19690.2"/>
    <property type="gene ID" value="AT4G19690"/>
</dbReference>
<dbReference type="GeneID" id="827713"/>
<dbReference type="Gramene" id="AT4G19690.1">
    <molecule id="Q38856-2"/>
    <property type="protein sequence ID" value="AT4G19690.1"/>
    <property type="gene ID" value="AT4G19690"/>
</dbReference>
<dbReference type="Gramene" id="AT4G19690.2">
    <molecule id="Q38856-1"/>
    <property type="protein sequence ID" value="AT4G19690.2"/>
    <property type="gene ID" value="AT4G19690"/>
</dbReference>
<dbReference type="KEGG" id="ath:AT4G19690"/>
<dbReference type="Araport" id="AT4G19690"/>
<dbReference type="TAIR" id="AT4G19690">
    <property type="gene designation" value="IRT1"/>
</dbReference>
<dbReference type="eggNOG" id="KOG1558">
    <property type="taxonomic scope" value="Eukaryota"/>
</dbReference>
<dbReference type="HOGENOM" id="CLU_027089_3_0_1"/>
<dbReference type="InParanoid" id="Q38856"/>
<dbReference type="OMA" id="EATSDIC"/>
<dbReference type="OrthoDB" id="448280at2759"/>
<dbReference type="BioCyc" id="ARA:AT4G19690-MONOMER"/>
<dbReference type="BioCyc" id="MetaCyc:AT4G19690-MONOMER"/>
<dbReference type="PRO" id="PR:Q38856"/>
<dbReference type="Proteomes" id="UP000006548">
    <property type="component" value="Chromosome 4"/>
</dbReference>
<dbReference type="ExpressionAtlas" id="Q38856">
    <property type="expression patterns" value="baseline and differential"/>
</dbReference>
<dbReference type="GO" id="GO:0005769">
    <property type="term" value="C:early endosome"/>
    <property type="evidence" value="ECO:0007669"/>
    <property type="project" value="UniProtKB-SubCell"/>
</dbReference>
<dbReference type="GO" id="GO:0005768">
    <property type="term" value="C:endosome"/>
    <property type="evidence" value="ECO:0000314"/>
    <property type="project" value="TAIR"/>
</dbReference>
<dbReference type="GO" id="GO:0005886">
    <property type="term" value="C:plasma membrane"/>
    <property type="evidence" value="ECO:0000314"/>
    <property type="project" value="TAIR"/>
</dbReference>
<dbReference type="GO" id="GO:0005802">
    <property type="term" value="C:trans-Golgi network"/>
    <property type="evidence" value="ECO:0000314"/>
    <property type="project" value="TAIR"/>
</dbReference>
<dbReference type="GO" id="GO:0005773">
    <property type="term" value="C:vacuole"/>
    <property type="evidence" value="ECO:0007669"/>
    <property type="project" value="UniProtKB-SubCell"/>
</dbReference>
<dbReference type="GO" id="GO:0005375">
    <property type="term" value="F:copper ion transmembrane transporter activity"/>
    <property type="evidence" value="ECO:0000316"/>
    <property type="project" value="TAIR"/>
</dbReference>
<dbReference type="GO" id="GO:0005381">
    <property type="term" value="F:iron ion transmembrane transporter activity"/>
    <property type="evidence" value="ECO:0000316"/>
    <property type="project" value="TAIR"/>
</dbReference>
<dbReference type="GO" id="GO:0005385">
    <property type="term" value="F:zinc ion transmembrane transporter activity"/>
    <property type="evidence" value="ECO:0007669"/>
    <property type="project" value="InterPro"/>
</dbReference>
<dbReference type="GO" id="GO:0030001">
    <property type="term" value="P:metal ion transport"/>
    <property type="evidence" value="ECO:0000315"/>
    <property type="project" value="TAIR"/>
</dbReference>
<dbReference type="GO" id="GO:0015675">
    <property type="term" value="P:nickel cation transport"/>
    <property type="evidence" value="ECO:0000315"/>
    <property type="project" value="TAIR"/>
</dbReference>
<dbReference type="GO" id="GO:0009617">
    <property type="term" value="P:response to bacterium"/>
    <property type="evidence" value="ECO:0000270"/>
    <property type="project" value="TAIR"/>
</dbReference>
<dbReference type="InterPro" id="IPR003689">
    <property type="entry name" value="ZIP"/>
</dbReference>
<dbReference type="InterPro" id="IPR004698">
    <property type="entry name" value="Zn/Fe_permease_fun/pln"/>
</dbReference>
<dbReference type="NCBIfam" id="TIGR00820">
    <property type="entry name" value="zip"/>
    <property type="match status" value="1"/>
</dbReference>
<dbReference type="PANTHER" id="PTHR11040:SF183">
    <property type="entry name" value="FE(2+) TRANSPORT PROTEIN 1"/>
    <property type="match status" value="1"/>
</dbReference>
<dbReference type="PANTHER" id="PTHR11040">
    <property type="entry name" value="ZINC/IRON TRANSPORTER"/>
    <property type="match status" value="1"/>
</dbReference>
<dbReference type="Pfam" id="PF02535">
    <property type="entry name" value="Zip"/>
    <property type="match status" value="1"/>
</dbReference>
<gene>
    <name type="primary">IRT1</name>
    <name type="ordered locus">At4g19690</name>
    <name type="ORF">T16H5.50</name>
</gene>
<evidence type="ECO:0000255" key="1"/>
<evidence type="ECO:0000269" key="2">
    <source>
    </source>
</evidence>
<evidence type="ECO:0000269" key="3">
    <source>
    </source>
</evidence>
<evidence type="ECO:0000269" key="4">
    <source>
    </source>
</evidence>
<evidence type="ECO:0000269" key="5">
    <source>
    </source>
</evidence>
<evidence type="ECO:0000303" key="6">
    <source ref="3"/>
</evidence>
<evidence type="ECO:0000305" key="7"/>
<evidence type="ECO:0000305" key="8">
    <source>
    </source>
</evidence>
<protein>
    <recommendedName>
        <fullName>Fe(2+) transport protein 1</fullName>
    </recommendedName>
    <alternativeName>
        <fullName>Fe(II) transport protein 1</fullName>
    </alternativeName>
    <alternativeName>
        <fullName>Iron-regulated transporter 1</fullName>
    </alternativeName>
</protein>
<feature type="signal peptide" evidence="1">
    <location>
        <begin position="1"/>
        <end position="22"/>
    </location>
</feature>
<feature type="chain" id="PRO_0000041636" description="Fe(2+) transport protein 1">
    <location>
        <begin position="23"/>
        <end position="347"/>
    </location>
</feature>
<feature type="topological domain" description="Extracellular" evidence="1">
    <location>
        <begin position="23"/>
        <end position="52"/>
    </location>
</feature>
<feature type="transmembrane region" description="Helical" evidence="1">
    <location>
        <begin position="53"/>
        <end position="73"/>
    </location>
</feature>
<feature type="topological domain" description="Cytoplasmic" evidence="1">
    <location>
        <begin position="74"/>
        <end position="84"/>
    </location>
</feature>
<feature type="transmembrane region" description="Helical" evidence="1">
    <location>
        <begin position="85"/>
        <end position="105"/>
    </location>
</feature>
<feature type="topological domain" description="Extracellular" evidence="1">
    <location>
        <begin position="106"/>
        <end position="125"/>
    </location>
</feature>
<feature type="transmembrane region" description="Helical" evidence="1">
    <location>
        <begin position="126"/>
        <end position="146"/>
    </location>
</feature>
<feature type="topological domain" description="Cytoplasmic" evidence="1">
    <location>
        <begin position="147"/>
        <end position="192"/>
    </location>
</feature>
<feature type="transmembrane region" description="Helical" evidence="1">
    <location>
        <begin position="193"/>
        <end position="213"/>
    </location>
</feature>
<feature type="topological domain" description="Extracellular" evidence="1">
    <location>
        <begin position="214"/>
        <end position="224"/>
    </location>
</feature>
<feature type="transmembrane region" description="Helical" evidence="1">
    <location>
        <begin position="225"/>
        <end position="245"/>
    </location>
</feature>
<feature type="topological domain" description="Cytoplasmic" evidence="1">
    <location>
        <begin position="246"/>
        <end position="254"/>
    </location>
</feature>
<feature type="transmembrane region" description="Helical" evidence="1">
    <location>
        <begin position="255"/>
        <end position="275"/>
    </location>
</feature>
<feature type="topological domain" description="Extracellular" evidence="1">
    <location>
        <begin position="276"/>
        <end position="286"/>
    </location>
</feature>
<feature type="transmembrane region" description="Helical" evidence="1">
    <location>
        <begin position="287"/>
        <end position="307"/>
    </location>
</feature>
<feature type="topological domain" description="Cytoplasmic" evidence="1">
    <location>
        <begin position="308"/>
        <end position="326"/>
    </location>
</feature>
<feature type="transmembrane region" description="Helical" evidence="1">
    <location>
        <begin position="327"/>
        <end position="347"/>
    </location>
</feature>
<feature type="cross-link" description="Glycyl lysine isopeptide (Lys-Gly) (interchain with G-Cter in ubiquitin)" evidence="8">
    <location>
        <position position="154"/>
    </location>
</feature>
<feature type="cross-link" description="Glycyl lysine isopeptide (Lys-Gly) (interchain with G-Cter in ubiquitin)" evidence="8">
    <location>
        <position position="179"/>
    </location>
</feature>
<feature type="splice variant" id="VSP_008361" description="In isoform 2." evidence="6">
    <original>LELGIIVHSVVIGL</original>
    <variation>RTHIYTYRISLYFK</variation>
    <location>
        <begin position="198"/>
        <end position="211"/>
    </location>
</feature>
<feature type="splice variant" id="VSP_008362" description="In isoform 2." evidence="6">
    <location>
        <begin position="212"/>
        <end position="347"/>
    </location>
</feature>
<feature type="mutagenesis site" description="Suppresses transport." evidence="2">
    <original>H</original>
    <variation>A</variation>
    <location>
        <position position="104"/>
    </location>
</feature>
<feature type="mutagenesis site" description="Abolishes iron and manganese transport." evidence="2">
    <original>D</original>
    <variation>A</variation>
    <location>
        <position position="108"/>
    </location>
</feature>
<feature type="mutagenesis site" description="Abolishes zinc transport. Abolishes iron and manganese transport; when associated with A-108." evidence="2">
    <original>E</original>
    <variation>A</variation>
    <location>
        <position position="111"/>
    </location>
</feature>
<feature type="mutagenesis site" description="Abolishes iron and manganese transport. Reduces cadmium transport." evidence="2">
    <original>D</original>
    <variation>A</variation>
    <location>
        <position position="144"/>
    </location>
</feature>
<feature type="mutagenesis site" description="Suppresses ubiquitination and loss of activity; when associated with R-179." evidence="4">
    <original>K</original>
    <variation>R</variation>
    <location>
        <position position="154"/>
    </location>
</feature>
<feature type="mutagenesis site" description="Suppresses ubiquitination and loss of activity; when associated with R-154." evidence="4">
    <original>K</original>
    <variation>R</variation>
    <location>
        <position position="179"/>
    </location>
</feature>
<feature type="mutagenesis site" description="Suppresses transport." evidence="2">
    <original>H</original>
    <variation>A</variation>
    <variation>E</variation>
    <location>
        <position position="205"/>
    </location>
</feature>
<feature type="mutagenesis site" description="Suppresses transport." evidence="2">
    <original>S</original>
    <variation>A</variation>
    <location>
        <position position="206"/>
    </location>
</feature>
<feature type="mutagenesis site" description="Suppresses transport." evidence="2">
    <original>H</original>
    <variation>A</variation>
    <location>
        <position position="232"/>
    </location>
</feature>
<feature type="mutagenesis site" description="Suppresses transport." evidence="2">
    <original>E</original>
    <variation>A</variation>
    <location>
        <position position="236"/>
    </location>
</feature>
<comment type="function">
    <text evidence="3">High-affinity iron transporter that plays a key role in the uptake of iron from the rhizosphere across the plasma membrane in the root epidermal layer. Acts as the principal regulator of iron homeostasis in planta. Also mediates the heavy metals uptake under iron-deficiency by its ability to transport cobalt, cadmium, manganese and/or zinc ions.</text>
</comment>
<comment type="subunit">
    <text evidence="5">Interacts with FREE1.</text>
</comment>
<comment type="interaction">
    <interactant intactId="EBI-15928951">
        <id>Q38856</id>
    </interactant>
    <interactant intactId="EBI-1541543">
        <id>P59263</id>
        <label>UBQ16</label>
    </interactant>
    <organismsDiffer>false</organismsDiffer>
    <experiments>3</experiments>
</comment>
<comment type="subcellular location">
    <subcellularLocation>
        <location evidence="3 4 5">Cell membrane</location>
        <topology evidence="3">Multi-pass membrane protein</topology>
    </subcellularLocation>
    <subcellularLocation>
        <location evidence="4 5">Early endosome</location>
    </subcellularLocation>
    <subcellularLocation>
        <location evidence="4 5">Golgi apparatus</location>
        <location evidence="4 5">trans-Golgi network</location>
    </subcellularLocation>
    <subcellularLocation>
        <location evidence="4">Vacuole</location>
    </subcellularLocation>
    <text evidence="4">Cycles constitutively between early endosomes and the plasma membrane and is targeted to the vacuole for degradation.</text>
</comment>
<comment type="alternative products">
    <event type="alternative splicing"/>
    <isoform>
        <id>Q38856-1</id>
        <name>1</name>
        <sequence type="displayed"/>
    </isoform>
    <isoform>
        <id>Q38856-2</id>
        <name>2</name>
        <sequence type="described" ref="VSP_008361 VSP_008362"/>
    </isoform>
</comment>
<comment type="tissue specificity">
    <text evidence="3">Expressed in the external cell layers of the root including the lateral branching zone. Also detected in flowers before pollination.</text>
</comment>
<comment type="induction">
    <text evidence="4">In roots by iron starvation.</text>
</comment>
<comment type="PTM">
    <text evidence="4">Monoubiquitinated on several Lys residues. Monoubiquitination controls trafficking from the plasma membrane and targeting to the vacuole.</text>
</comment>
<comment type="disruption phenotype">
    <text evidence="3">Plants exhibit a lethal chlorotic phenotype.</text>
</comment>
<comment type="miscellaneous">
    <text>Inhibited by cadmium and Fe(2+) ions and at 100-fold excess inhibited by cobalt, manganese and zinc ions.</text>
</comment>
<comment type="miscellaneous">
    <text evidence="5">The availability of secondary non-iron metal substrates (Zn, Mn, and Co) controls the localization of IRT1 between the outer polar domain of the plasma membrane and early endosome/trans-Golgi network in root epidermal cells.</text>
</comment>
<comment type="miscellaneous">
    <molecule>Isoform 2</molecule>
    <text evidence="7">May be due to an intron retention.</text>
</comment>
<comment type="similarity">
    <text evidence="7">Belongs to the ZIP transporter (TC 2.A.5) family.</text>
</comment>
<comment type="sequence caution" evidence="7">
    <conflict type="erroneous initiation">
        <sequence resource="EMBL-CDS" id="AAB01678"/>
    </conflict>
    <text>Truncated N-terminus.</text>
</comment>
<comment type="sequence caution" evidence="7">
    <conflict type="erroneous initiation">
        <sequence resource="EMBL-CDS" id="CAA19686"/>
    </conflict>
    <text>Truncated N-terminus.</text>
</comment>
<comment type="sequence caution" evidence="7">
    <conflict type="erroneous initiation">
        <sequence resource="EMBL-CDS" id="CAB78971"/>
    </conflict>
    <text>Truncated N-terminus.</text>
</comment>